<dbReference type="EC" id="2.1.1.45" evidence="1"/>
<dbReference type="EMBL" id="CP000158">
    <property type="protein sequence ID" value="ABI76504.1"/>
    <property type="molecule type" value="Genomic_DNA"/>
</dbReference>
<dbReference type="SMR" id="Q0C504"/>
<dbReference type="STRING" id="228405.HNE_0459"/>
<dbReference type="KEGG" id="hne:HNE_0459"/>
<dbReference type="eggNOG" id="COG0207">
    <property type="taxonomic scope" value="Bacteria"/>
</dbReference>
<dbReference type="HOGENOM" id="CLU_021669_0_0_5"/>
<dbReference type="UniPathway" id="UPA00575"/>
<dbReference type="Proteomes" id="UP000001959">
    <property type="component" value="Chromosome"/>
</dbReference>
<dbReference type="GO" id="GO:0005829">
    <property type="term" value="C:cytosol"/>
    <property type="evidence" value="ECO:0007669"/>
    <property type="project" value="TreeGrafter"/>
</dbReference>
<dbReference type="GO" id="GO:0004799">
    <property type="term" value="F:thymidylate synthase activity"/>
    <property type="evidence" value="ECO:0007669"/>
    <property type="project" value="UniProtKB-UniRule"/>
</dbReference>
<dbReference type="GO" id="GO:0006231">
    <property type="term" value="P:dTMP biosynthetic process"/>
    <property type="evidence" value="ECO:0007669"/>
    <property type="project" value="UniProtKB-UniRule"/>
</dbReference>
<dbReference type="GO" id="GO:0006235">
    <property type="term" value="P:dTTP biosynthetic process"/>
    <property type="evidence" value="ECO:0007669"/>
    <property type="project" value="UniProtKB-UniRule"/>
</dbReference>
<dbReference type="GO" id="GO:0032259">
    <property type="term" value="P:methylation"/>
    <property type="evidence" value="ECO:0007669"/>
    <property type="project" value="UniProtKB-KW"/>
</dbReference>
<dbReference type="CDD" id="cd00351">
    <property type="entry name" value="TS_Pyrimidine_HMase"/>
    <property type="match status" value="1"/>
</dbReference>
<dbReference type="FunFam" id="3.30.572.10:FF:000001">
    <property type="entry name" value="Thymidylate synthase"/>
    <property type="match status" value="1"/>
</dbReference>
<dbReference type="Gene3D" id="3.30.572.10">
    <property type="entry name" value="Thymidylate synthase/dCMP hydroxymethylase domain"/>
    <property type="match status" value="1"/>
</dbReference>
<dbReference type="HAMAP" id="MF_00008">
    <property type="entry name" value="Thymidy_synth_bact"/>
    <property type="match status" value="1"/>
</dbReference>
<dbReference type="InterPro" id="IPR045097">
    <property type="entry name" value="Thymidate_synth/dCMP_Mease"/>
</dbReference>
<dbReference type="InterPro" id="IPR023451">
    <property type="entry name" value="Thymidate_synth/dCMP_Mease_dom"/>
</dbReference>
<dbReference type="InterPro" id="IPR036926">
    <property type="entry name" value="Thymidate_synth/dCMP_Mease_sf"/>
</dbReference>
<dbReference type="InterPro" id="IPR000398">
    <property type="entry name" value="Thymidylate_synthase"/>
</dbReference>
<dbReference type="InterPro" id="IPR020940">
    <property type="entry name" value="Thymidylate_synthase_AS"/>
</dbReference>
<dbReference type="NCBIfam" id="NF002497">
    <property type="entry name" value="PRK01827.1-3"/>
    <property type="match status" value="1"/>
</dbReference>
<dbReference type="NCBIfam" id="NF002499">
    <property type="entry name" value="PRK01827.1-5"/>
    <property type="match status" value="1"/>
</dbReference>
<dbReference type="NCBIfam" id="TIGR03284">
    <property type="entry name" value="thym_sym"/>
    <property type="match status" value="2"/>
</dbReference>
<dbReference type="PANTHER" id="PTHR11548:SF9">
    <property type="entry name" value="THYMIDYLATE SYNTHASE"/>
    <property type="match status" value="1"/>
</dbReference>
<dbReference type="PANTHER" id="PTHR11548">
    <property type="entry name" value="THYMIDYLATE SYNTHASE 1"/>
    <property type="match status" value="1"/>
</dbReference>
<dbReference type="Pfam" id="PF00303">
    <property type="entry name" value="Thymidylat_synt"/>
    <property type="match status" value="1"/>
</dbReference>
<dbReference type="PRINTS" id="PR00108">
    <property type="entry name" value="THYMDSNTHASE"/>
</dbReference>
<dbReference type="SUPFAM" id="SSF55831">
    <property type="entry name" value="Thymidylate synthase/dCMP hydroxymethylase"/>
    <property type="match status" value="1"/>
</dbReference>
<dbReference type="PROSITE" id="PS00091">
    <property type="entry name" value="THYMIDYLATE_SYNTHASE"/>
    <property type="match status" value="1"/>
</dbReference>
<reference key="1">
    <citation type="journal article" date="2006" name="J. Bacteriol.">
        <title>Comparative genomic evidence for a close relationship between the dimorphic prosthecate bacteria Hyphomonas neptunium and Caulobacter crescentus.</title>
        <authorList>
            <person name="Badger J.H."/>
            <person name="Hoover T.R."/>
            <person name="Brun Y.V."/>
            <person name="Weiner R.M."/>
            <person name="Laub M.T."/>
            <person name="Alexandre G."/>
            <person name="Mrazek J."/>
            <person name="Ren Q."/>
            <person name="Paulsen I.T."/>
            <person name="Nelson K.E."/>
            <person name="Khouri H.M."/>
            <person name="Radune D."/>
            <person name="Sosa J."/>
            <person name="Dodson R.J."/>
            <person name="Sullivan S.A."/>
            <person name="Rosovitz M.J."/>
            <person name="Madupu R."/>
            <person name="Brinkac L.M."/>
            <person name="Durkin A.S."/>
            <person name="Daugherty S.C."/>
            <person name="Kothari S.P."/>
            <person name="Giglio M.G."/>
            <person name="Zhou L."/>
            <person name="Haft D.H."/>
            <person name="Selengut J.D."/>
            <person name="Davidsen T.M."/>
            <person name="Yang Q."/>
            <person name="Zafar N."/>
            <person name="Ward N.L."/>
        </authorList>
    </citation>
    <scope>NUCLEOTIDE SEQUENCE [LARGE SCALE GENOMIC DNA]</scope>
    <source>
        <strain>ATCC 15444</strain>
    </source>
</reference>
<name>TYSY_HYPNA</name>
<protein>
    <recommendedName>
        <fullName evidence="1">Thymidylate synthase</fullName>
        <shortName evidence="1">TS</shortName>
        <shortName evidence="1">TSase</shortName>
        <ecNumber evidence="1">2.1.1.45</ecNumber>
    </recommendedName>
</protein>
<comment type="function">
    <text evidence="1">Catalyzes the reductive methylation of 2'-deoxyuridine-5'-monophosphate (dUMP) to 2'-deoxythymidine-5'-monophosphate (dTMP) while utilizing 5,10-methylenetetrahydrofolate (mTHF) as the methyl donor and reductant in the reaction, yielding dihydrofolate (DHF) as a by-product. This enzymatic reaction provides an intracellular de novo source of dTMP, an essential precursor for DNA biosynthesis.</text>
</comment>
<comment type="catalytic activity">
    <reaction evidence="1">
        <text>dUMP + (6R)-5,10-methylene-5,6,7,8-tetrahydrofolate = 7,8-dihydrofolate + dTMP</text>
        <dbReference type="Rhea" id="RHEA:12104"/>
        <dbReference type="ChEBI" id="CHEBI:15636"/>
        <dbReference type="ChEBI" id="CHEBI:57451"/>
        <dbReference type="ChEBI" id="CHEBI:63528"/>
        <dbReference type="ChEBI" id="CHEBI:246422"/>
        <dbReference type="EC" id="2.1.1.45"/>
    </reaction>
</comment>
<comment type="pathway">
    <text evidence="1">Pyrimidine metabolism; dTTP biosynthesis.</text>
</comment>
<comment type="subunit">
    <text evidence="1">Homodimer.</text>
</comment>
<comment type="subcellular location">
    <subcellularLocation>
        <location evidence="1">Cytoplasm</location>
    </subcellularLocation>
</comment>
<comment type="similarity">
    <text evidence="1">Belongs to the thymidylate synthase family. Bacterial-type ThyA subfamily.</text>
</comment>
<organism>
    <name type="scientific">Hyphomonas neptunium (strain ATCC 15444)</name>
    <dbReference type="NCBI Taxonomy" id="228405"/>
    <lineage>
        <taxon>Bacteria</taxon>
        <taxon>Pseudomonadati</taxon>
        <taxon>Pseudomonadota</taxon>
        <taxon>Alphaproteobacteria</taxon>
        <taxon>Hyphomonadales</taxon>
        <taxon>Hyphomonadaceae</taxon>
        <taxon>Hyphomonas</taxon>
    </lineage>
</organism>
<evidence type="ECO:0000255" key="1">
    <source>
        <dbReference type="HAMAP-Rule" id="MF_00008"/>
    </source>
</evidence>
<sequence length="264" mass="30196">MQQYQALLRDILENGHKRGDRTGVGTIGVFGRQMRFDLSEGFPMVTTKRLHLRSIIVELLWFLRGDTNIAYLKENGVSIWDEWADENGDLGPVYGKQWRSWATPNGEAIDQIQWVLNEIRTNPNSRRLIVSAWNPADVNDMALPPCHCLFQFNVMDGKLNCQLYQRSADVFLGVPFNIASYALLTMMMARATGLQPGEFVHTFGDAHLYLNHLEQAELQLTREPRDLPTIHMNPDKADLFGWEYEDFRVDGYAPHPHIKAPVAV</sequence>
<accession>Q0C504</accession>
<proteinExistence type="inferred from homology"/>
<keyword id="KW-0963">Cytoplasm</keyword>
<keyword id="KW-0489">Methyltransferase</keyword>
<keyword id="KW-0545">Nucleotide biosynthesis</keyword>
<keyword id="KW-1185">Reference proteome</keyword>
<keyword id="KW-0808">Transferase</keyword>
<gene>
    <name evidence="1" type="primary">thyA</name>
    <name type="ordered locus">HNE_0459</name>
</gene>
<feature type="chain" id="PRO_1000000610" description="Thymidylate synthase">
    <location>
        <begin position="1"/>
        <end position="264"/>
    </location>
</feature>
<feature type="active site" description="Nucleophile" evidence="1">
    <location>
        <position position="146"/>
    </location>
</feature>
<feature type="binding site" description="in other chain" evidence="1">
    <location>
        <position position="21"/>
    </location>
    <ligand>
        <name>dUMP</name>
        <dbReference type="ChEBI" id="CHEBI:246422"/>
        <note>ligand shared between dimeric partners</note>
    </ligand>
</feature>
<feature type="binding site" evidence="1">
    <location>
        <position position="51"/>
    </location>
    <ligand>
        <name>(6R)-5,10-methylene-5,6,7,8-tetrahydrofolate</name>
        <dbReference type="ChEBI" id="CHEBI:15636"/>
    </ligand>
</feature>
<feature type="binding site" evidence="1">
    <location>
        <begin position="126"/>
        <end position="127"/>
    </location>
    <ligand>
        <name>dUMP</name>
        <dbReference type="ChEBI" id="CHEBI:246422"/>
        <note>ligand shared between dimeric partners</note>
    </ligand>
</feature>
<feature type="binding site" description="in other chain" evidence="1">
    <location>
        <begin position="166"/>
        <end position="169"/>
    </location>
    <ligand>
        <name>dUMP</name>
        <dbReference type="ChEBI" id="CHEBI:246422"/>
        <note>ligand shared between dimeric partners</note>
    </ligand>
</feature>
<feature type="binding site" evidence="1">
    <location>
        <position position="169"/>
    </location>
    <ligand>
        <name>(6R)-5,10-methylene-5,6,7,8-tetrahydrofolate</name>
        <dbReference type="ChEBI" id="CHEBI:15636"/>
    </ligand>
</feature>
<feature type="binding site" description="in other chain" evidence="1">
    <location>
        <position position="177"/>
    </location>
    <ligand>
        <name>dUMP</name>
        <dbReference type="ChEBI" id="CHEBI:246422"/>
        <note>ligand shared between dimeric partners</note>
    </ligand>
</feature>
<feature type="binding site" description="in other chain" evidence="1">
    <location>
        <begin position="207"/>
        <end position="209"/>
    </location>
    <ligand>
        <name>dUMP</name>
        <dbReference type="ChEBI" id="CHEBI:246422"/>
        <note>ligand shared between dimeric partners</note>
    </ligand>
</feature>
<feature type="binding site" evidence="1">
    <location>
        <position position="263"/>
    </location>
    <ligand>
        <name>(6R)-5,10-methylene-5,6,7,8-tetrahydrofolate</name>
        <dbReference type="ChEBI" id="CHEBI:15636"/>
    </ligand>
</feature>